<comment type="similarity">
    <text evidence="1">Belongs to the bacterial ribosomal protein bL34 family.</text>
</comment>
<organism>
    <name type="scientific">Chlamydia muridarum (strain MoPn / Nigg)</name>
    <dbReference type="NCBI Taxonomy" id="243161"/>
    <lineage>
        <taxon>Bacteria</taxon>
        <taxon>Pseudomonadati</taxon>
        <taxon>Chlamydiota</taxon>
        <taxon>Chlamydiia</taxon>
        <taxon>Chlamydiales</taxon>
        <taxon>Chlamydiaceae</taxon>
        <taxon>Chlamydia/Chlamydophila group</taxon>
        <taxon>Chlamydia</taxon>
    </lineage>
</organism>
<evidence type="ECO:0000305" key="1"/>
<accession>Q9PLD6</accession>
<sequence>MKRTYQPSKRKRTNSVGFRARMATKSGRNLLNRRRRHGRHSLIDL</sequence>
<keyword id="KW-0687">Ribonucleoprotein</keyword>
<keyword id="KW-0689">Ribosomal protein</keyword>
<protein>
    <recommendedName>
        <fullName evidence="1">Large ribosomal subunit protein bL34</fullName>
    </recommendedName>
    <alternativeName>
        <fullName>50S ribosomal protein L34</fullName>
    </alternativeName>
</protein>
<feature type="chain" id="PRO_0000187364" description="Large ribosomal subunit protein bL34">
    <location>
        <begin position="1"/>
        <end position="45"/>
    </location>
</feature>
<name>RL34_CHLMU</name>
<dbReference type="EMBL" id="AE002160">
    <property type="protein sequence ID" value="AAF39043.1"/>
    <property type="molecule type" value="Genomic_DNA"/>
</dbReference>
<dbReference type="PIR" id="B81733">
    <property type="entry name" value="B81733"/>
</dbReference>
<dbReference type="RefSeq" id="WP_010904284.1">
    <property type="nucleotide sequence ID" value="NC_002620.2"/>
</dbReference>
<dbReference type="SMR" id="Q9PLD6"/>
<dbReference type="GeneID" id="31473801"/>
<dbReference type="KEGG" id="cmu:TC_0168"/>
<dbReference type="eggNOG" id="COG0230">
    <property type="taxonomic scope" value="Bacteria"/>
</dbReference>
<dbReference type="HOGENOM" id="CLU_129938_2_1_0"/>
<dbReference type="Proteomes" id="UP000000800">
    <property type="component" value="Chromosome"/>
</dbReference>
<dbReference type="GO" id="GO:1990904">
    <property type="term" value="C:ribonucleoprotein complex"/>
    <property type="evidence" value="ECO:0007669"/>
    <property type="project" value="UniProtKB-KW"/>
</dbReference>
<dbReference type="GO" id="GO:0005840">
    <property type="term" value="C:ribosome"/>
    <property type="evidence" value="ECO:0007669"/>
    <property type="project" value="UniProtKB-KW"/>
</dbReference>
<dbReference type="GO" id="GO:0003735">
    <property type="term" value="F:structural constituent of ribosome"/>
    <property type="evidence" value="ECO:0007669"/>
    <property type="project" value="InterPro"/>
</dbReference>
<dbReference type="GO" id="GO:0006412">
    <property type="term" value="P:translation"/>
    <property type="evidence" value="ECO:0007669"/>
    <property type="project" value="UniProtKB-UniRule"/>
</dbReference>
<dbReference type="FunFam" id="1.10.287.3980:FF:000001">
    <property type="entry name" value="Mitochondrial ribosomal protein L34"/>
    <property type="match status" value="1"/>
</dbReference>
<dbReference type="Gene3D" id="1.10.287.3980">
    <property type="match status" value="1"/>
</dbReference>
<dbReference type="HAMAP" id="MF_00391">
    <property type="entry name" value="Ribosomal_bL34"/>
    <property type="match status" value="1"/>
</dbReference>
<dbReference type="InterPro" id="IPR000271">
    <property type="entry name" value="Ribosomal_bL34"/>
</dbReference>
<dbReference type="InterPro" id="IPR020939">
    <property type="entry name" value="Ribosomal_bL34_CS"/>
</dbReference>
<dbReference type="NCBIfam" id="TIGR01030">
    <property type="entry name" value="rpmH_bact"/>
    <property type="match status" value="1"/>
</dbReference>
<dbReference type="PANTHER" id="PTHR14503:SF4">
    <property type="entry name" value="LARGE RIBOSOMAL SUBUNIT PROTEIN BL34M"/>
    <property type="match status" value="1"/>
</dbReference>
<dbReference type="PANTHER" id="PTHR14503">
    <property type="entry name" value="MITOCHONDRIAL RIBOSOMAL PROTEIN 34 FAMILY MEMBER"/>
    <property type="match status" value="1"/>
</dbReference>
<dbReference type="Pfam" id="PF00468">
    <property type="entry name" value="Ribosomal_L34"/>
    <property type="match status" value="1"/>
</dbReference>
<dbReference type="PROSITE" id="PS00784">
    <property type="entry name" value="RIBOSOMAL_L34"/>
    <property type="match status" value="1"/>
</dbReference>
<reference key="1">
    <citation type="journal article" date="2000" name="Nucleic Acids Res.">
        <title>Genome sequences of Chlamydia trachomatis MoPn and Chlamydia pneumoniae AR39.</title>
        <authorList>
            <person name="Read T.D."/>
            <person name="Brunham R.C."/>
            <person name="Shen C."/>
            <person name="Gill S.R."/>
            <person name="Heidelberg J.F."/>
            <person name="White O."/>
            <person name="Hickey E.K."/>
            <person name="Peterson J.D."/>
            <person name="Utterback T.R."/>
            <person name="Berry K.J."/>
            <person name="Bass S."/>
            <person name="Linher K.D."/>
            <person name="Weidman J.F."/>
            <person name="Khouri H.M."/>
            <person name="Craven B."/>
            <person name="Bowman C."/>
            <person name="Dodson R.J."/>
            <person name="Gwinn M.L."/>
            <person name="Nelson W.C."/>
            <person name="DeBoy R.T."/>
            <person name="Kolonay J.F."/>
            <person name="McClarty G."/>
            <person name="Salzberg S.L."/>
            <person name="Eisen J.A."/>
            <person name="Fraser C.M."/>
        </authorList>
    </citation>
    <scope>NUCLEOTIDE SEQUENCE [LARGE SCALE GENOMIC DNA]</scope>
    <source>
        <strain>MoPn / Nigg</strain>
    </source>
</reference>
<proteinExistence type="inferred from homology"/>
<gene>
    <name type="primary">rpmH</name>
    <name type="ordered locus">TC_0168</name>
</gene>